<sequence>MKLLNFKIIIIQDVLCNNKDYKDNNYNNNKIERLTTSALSRSANRIPTTSSTSTSGTIPTTTITPRQSIINNRNQIINKPQKQHHLLVQIEIH</sequence>
<feature type="chain" id="PRO_0000347011" description="Putative uncharacterized protein DDB_G0287867">
    <location>
        <begin position="1"/>
        <end position="93"/>
    </location>
</feature>
<feature type="region of interest" description="Disordered" evidence="1">
    <location>
        <begin position="41"/>
        <end position="62"/>
    </location>
</feature>
<feature type="compositionally biased region" description="Low complexity" evidence="1">
    <location>
        <begin position="46"/>
        <end position="62"/>
    </location>
</feature>
<proteinExistence type="predicted"/>
<evidence type="ECO:0000256" key="1">
    <source>
        <dbReference type="SAM" id="MobiDB-lite"/>
    </source>
</evidence>
<dbReference type="EMBL" id="AAFI02000104">
    <property type="protein sequence ID" value="EAL63580.1"/>
    <property type="molecule type" value="Genomic_DNA"/>
</dbReference>
<dbReference type="RefSeq" id="XP_637056.1">
    <property type="nucleotide sequence ID" value="XM_631964.1"/>
</dbReference>
<dbReference type="SMR" id="Q54JU6"/>
<dbReference type="PaxDb" id="44689-DDB0187638"/>
<dbReference type="EnsemblProtists" id="EAL63580">
    <property type="protein sequence ID" value="EAL63580"/>
    <property type="gene ID" value="DDB_G0287867"/>
</dbReference>
<dbReference type="GeneID" id="8626310"/>
<dbReference type="KEGG" id="ddi:DDB_G0287867"/>
<dbReference type="HOGENOM" id="CLU_2404160_0_0_1"/>
<dbReference type="InParanoid" id="Q54JU6"/>
<dbReference type="PRO" id="PR:Q54JU6"/>
<dbReference type="Proteomes" id="UP000002195">
    <property type="component" value="Chromosome 5"/>
</dbReference>
<name>Y7638_DICDI</name>
<reference key="1">
    <citation type="journal article" date="2005" name="Nature">
        <title>The genome of the social amoeba Dictyostelium discoideum.</title>
        <authorList>
            <person name="Eichinger L."/>
            <person name="Pachebat J.A."/>
            <person name="Gloeckner G."/>
            <person name="Rajandream M.A."/>
            <person name="Sucgang R."/>
            <person name="Berriman M."/>
            <person name="Song J."/>
            <person name="Olsen R."/>
            <person name="Szafranski K."/>
            <person name="Xu Q."/>
            <person name="Tunggal B."/>
            <person name="Kummerfeld S."/>
            <person name="Madera M."/>
            <person name="Konfortov B.A."/>
            <person name="Rivero F."/>
            <person name="Bankier A.T."/>
            <person name="Lehmann R."/>
            <person name="Hamlin N."/>
            <person name="Davies R."/>
            <person name="Gaudet P."/>
            <person name="Fey P."/>
            <person name="Pilcher K."/>
            <person name="Chen G."/>
            <person name="Saunders D."/>
            <person name="Sodergren E.J."/>
            <person name="Davis P."/>
            <person name="Kerhornou A."/>
            <person name="Nie X."/>
            <person name="Hall N."/>
            <person name="Anjard C."/>
            <person name="Hemphill L."/>
            <person name="Bason N."/>
            <person name="Farbrother P."/>
            <person name="Desany B."/>
            <person name="Just E."/>
            <person name="Morio T."/>
            <person name="Rost R."/>
            <person name="Churcher C.M."/>
            <person name="Cooper J."/>
            <person name="Haydock S."/>
            <person name="van Driessche N."/>
            <person name="Cronin A."/>
            <person name="Goodhead I."/>
            <person name="Muzny D.M."/>
            <person name="Mourier T."/>
            <person name="Pain A."/>
            <person name="Lu M."/>
            <person name="Harper D."/>
            <person name="Lindsay R."/>
            <person name="Hauser H."/>
            <person name="James K.D."/>
            <person name="Quiles M."/>
            <person name="Madan Babu M."/>
            <person name="Saito T."/>
            <person name="Buchrieser C."/>
            <person name="Wardroper A."/>
            <person name="Felder M."/>
            <person name="Thangavelu M."/>
            <person name="Johnson D."/>
            <person name="Knights A."/>
            <person name="Loulseged H."/>
            <person name="Mungall K.L."/>
            <person name="Oliver K."/>
            <person name="Price C."/>
            <person name="Quail M.A."/>
            <person name="Urushihara H."/>
            <person name="Hernandez J."/>
            <person name="Rabbinowitsch E."/>
            <person name="Steffen D."/>
            <person name="Sanders M."/>
            <person name="Ma J."/>
            <person name="Kohara Y."/>
            <person name="Sharp S."/>
            <person name="Simmonds M.N."/>
            <person name="Spiegler S."/>
            <person name="Tivey A."/>
            <person name="Sugano S."/>
            <person name="White B."/>
            <person name="Walker D."/>
            <person name="Woodward J.R."/>
            <person name="Winckler T."/>
            <person name="Tanaka Y."/>
            <person name="Shaulsky G."/>
            <person name="Schleicher M."/>
            <person name="Weinstock G.M."/>
            <person name="Rosenthal A."/>
            <person name="Cox E.C."/>
            <person name="Chisholm R.L."/>
            <person name="Gibbs R.A."/>
            <person name="Loomis W.F."/>
            <person name="Platzer M."/>
            <person name="Kay R.R."/>
            <person name="Williams J.G."/>
            <person name="Dear P.H."/>
            <person name="Noegel A.A."/>
            <person name="Barrell B.G."/>
            <person name="Kuspa A."/>
        </authorList>
    </citation>
    <scope>NUCLEOTIDE SEQUENCE [LARGE SCALE GENOMIC DNA]</scope>
    <source>
        <strain>AX4</strain>
    </source>
</reference>
<accession>Q54JU6</accession>
<keyword id="KW-1185">Reference proteome</keyword>
<protein>
    <recommendedName>
        <fullName>Putative uncharacterized protein DDB_G0287867</fullName>
    </recommendedName>
</protein>
<organism>
    <name type="scientific">Dictyostelium discoideum</name>
    <name type="common">Social amoeba</name>
    <dbReference type="NCBI Taxonomy" id="44689"/>
    <lineage>
        <taxon>Eukaryota</taxon>
        <taxon>Amoebozoa</taxon>
        <taxon>Evosea</taxon>
        <taxon>Eumycetozoa</taxon>
        <taxon>Dictyostelia</taxon>
        <taxon>Dictyosteliales</taxon>
        <taxon>Dictyosteliaceae</taxon>
        <taxon>Dictyostelium</taxon>
    </lineage>
</organism>
<gene>
    <name type="ORF">DDB_G0287867</name>
</gene>